<evidence type="ECO:0000255" key="1"/>
<evidence type="ECO:0000305" key="2"/>
<keyword id="KW-1003">Cell membrane</keyword>
<keyword id="KW-0472">Membrane</keyword>
<keyword id="KW-1185">Reference proteome</keyword>
<keyword id="KW-0812">Transmembrane</keyword>
<keyword id="KW-1133">Transmembrane helix</keyword>
<feature type="chain" id="PRO_0000103737" description="Uncharacterized protein Rv0897c">
    <location>
        <begin position="1"/>
        <end position="535"/>
    </location>
</feature>
<feature type="transmembrane region" description="Helical" evidence="1">
    <location>
        <begin position="7"/>
        <end position="27"/>
    </location>
</feature>
<feature type="transmembrane region" description="Helical" evidence="1">
    <location>
        <begin position="509"/>
        <end position="529"/>
    </location>
</feature>
<organism>
    <name type="scientific">Mycobacterium tuberculosis (strain ATCC 25618 / H37Rv)</name>
    <dbReference type="NCBI Taxonomy" id="83332"/>
    <lineage>
        <taxon>Bacteria</taxon>
        <taxon>Bacillati</taxon>
        <taxon>Actinomycetota</taxon>
        <taxon>Actinomycetes</taxon>
        <taxon>Mycobacteriales</taxon>
        <taxon>Mycobacteriaceae</taxon>
        <taxon>Mycobacterium</taxon>
        <taxon>Mycobacterium tuberculosis complex</taxon>
    </lineage>
</organism>
<reference key="1">
    <citation type="journal article" date="1998" name="Nature">
        <title>Deciphering the biology of Mycobacterium tuberculosis from the complete genome sequence.</title>
        <authorList>
            <person name="Cole S.T."/>
            <person name="Brosch R."/>
            <person name="Parkhill J."/>
            <person name="Garnier T."/>
            <person name="Churcher C.M."/>
            <person name="Harris D.E."/>
            <person name="Gordon S.V."/>
            <person name="Eiglmeier K."/>
            <person name="Gas S."/>
            <person name="Barry C.E. III"/>
            <person name="Tekaia F."/>
            <person name="Badcock K."/>
            <person name="Basham D."/>
            <person name="Brown D."/>
            <person name="Chillingworth T."/>
            <person name="Connor R."/>
            <person name="Davies R.M."/>
            <person name="Devlin K."/>
            <person name="Feltwell T."/>
            <person name="Gentles S."/>
            <person name="Hamlin N."/>
            <person name="Holroyd S."/>
            <person name="Hornsby T."/>
            <person name="Jagels K."/>
            <person name="Krogh A."/>
            <person name="McLean J."/>
            <person name="Moule S."/>
            <person name="Murphy L.D."/>
            <person name="Oliver S."/>
            <person name="Osborne J."/>
            <person name="Quail M.A."/>
            <person name="Rajandream M.A."/>
            <person name="Rogers J."/>
            <person name="Rutter S."/>
            <person name="Seeger K."/>
            <person name="Skelton S."/>
            <person name="Squares S."/>
            <person name="Squares R."/>
            <person name="Sulston J.E."/>
            <person name="Taylor K."/>
            <person name="Whitehead S."/>
            <person name="Barrell B.G."/>
        </authorList>
    </citation>
    <scope>NUCLEOTIDE SEQUENCE [LARGE SCALE GENOMIC DNA]</scope>
    <source>
        <strain>ATCC 25618 / H37Rv</strain>
    </source>
</reference>
<reference key="2">
    <citation type="journal article" date="2011" name="Mol. Cell. Proteomics">
        <title>Proteogenomic analysis of Mycobacterium tuberculosis by high resolution mass spectrometry.</title>
        <authorList>
            <person name="Kelkar D.S."/>
            <person name="Kumar D."/>
            <person name="Kumar P."/>
            <person name="Balakrishnan L."/>
            <person name="Muthusamy B."/>
            <person name="Yadav A.K."/>
            <person name="Shrivastava P."/>
            <person name="Marimuthu A."/>
            <person name="Anand S."/>
            <person name="Sundaram H."/>
            <person name="Kingsbury R."/>
            <person name="Harsha H.C."/>
            <person name="Nair B."/>
            <person name="Prasad T.S."/>
            <person name="Chauhan D.S."/>
            <person name="Katoch K."/>
            <person name="Katoch V.M."/>
            <person name="Kumar P."/>
            <person name="Chaerkady R."/>
            <person name="Ramachandran S."/>
            <person name="Dash D."/>
            <person name="Pandey A."/>
        </authorList>
    </citation>
    <scope>IDENTIFICATION BY MASS SPECTROMETRY [LARGE SCALE ANALYSIS]</scope>
    <source>
        <strain>ATCC 25618 / H37Rv</strain>
    </source>
</reference>
<proteinExistence type="evidence at protein level"/>
<protein>
    <recommendedName>
        <fullName>Uncharacterized protein Rv0897c</fullName>
    </recommendedName>
</protein>
<sequence length="535" mass="56234">MSDHDRDFDVVVVGGGHNGLVAAAYLARAGLRVRLLERLAQTGGAAVSIQAFDGVEVALSRYSYLVSLLPSRIVADLGAPVRLARRPFSSYTPAPATAGRSGLLIGPTGEPRAAHLAAIGAAPDAHGFAAFYRRCRLVTARLWPTLIEPLRTREQARRDIVEYGGHEAAAAWQAMVDEPIGHAIAGAVANDLLRGVIATDALIGTFARMHEPSLMQNICFLYHLVGGGTGVWHVPIGGMGSVTSALATAAARHGAEIVTGADVFALDPDGTVRYHSDGSDGAEHLVRGRFVLVGVTPAVLASLLGEPVAALAPGAQVKVNMVVRRLPRLRDDSVTPQQAFAGTFHVNETWSQLDAAYSQAASGRLPDPLPCEAYCHSLTDPSILSARLRDAGAQTLTVFGLHTPHSVFGDTEGLAERLTAAVLASLNSVLAEPIQDVLWTDAQSKPCIETTTTLDLQRTLGMTGGNIFHGALSWPFADNDDPLDTPARQWGVATDHERIMLCGSGARRGGAVSGIGGHNAAMAVLACLASRRKSP</sequence>
<name>Y897_MYCTU</name>
<comment type="subcellular location">
    <subcellularLocation>
        <location evidence="2">Cell membrane</location>
        <topology evidence="2">Multi-pass membrane protein</topology>
    </subcellularLocation>
</comment>
<gene>
    <name type="ordered locus">Rv0897c</name>
    <name type="ORF">MTCY31.25c</name>
</gene>
<dbReference type="EMBL" id="AL123456">
    <property type="protein sequence ID" value="CCP43645.1"/>
    <property type="molecule type" value="Genomic_DNA"/>
</dbReference>
<dbReference type="PIR" id="F70782">
    <property type="entry name" value="F70782"/>
</dbReference>
<dbReference type="RefSeq" id="NP_215412.1">
    <property type="nucleotide sequence ID" value="NC_000962.3"/>
</dbReference>
<dbReference type="RefSeq" id="WP_003900230.1">
    <property type="nucleotide sequence ID" value="NZ_NVQJ01000001.1"/>
</dbReference>
<dbReference type="SMR" id="P9WKP7"/>
<dbReference type="FunCoup" id="P9WKP7">
    <property type="interactions" value="5"/>
</dbReference>
<dbReference type="STRING" id="83332.Rv0897c"/>
<dbReference type="PaxDb" id="83332-Rv0897c"/>
<dbReference type="DNASU" id="885641"/>
<dbReference type="GeneID" id="885641"/>
<dbReference type="KEGG" id="mtu:Rv0897c"/>
<dbReference type="KEGG" id="mtv:RVBD_0897c"/>
<dbReference type="TubercuList" id="Rv0897c"/>
<dbReference type="eggNOG" id="COG1233">
    <property type="taxonomic scope" value="Bacteria"/>
</dbReference>
<dbReference type="InParanoid" id="P9WKP7"/>
<dbReference type="OrthoDB" id="9774675at2"/>
<dbReference type="PhylomeDB" id="P9WKP7"/>
<dbReference type="Proteomes" id="UP000001584">
    <property type="component" value="Chromosome"/>
</dbReference>
<dbReference type="GO" id="GO:0005886">
    <property type="term" value="C:plasma membrane"/>
    <property type="evidence" value="ECO:0007669"/>
    <property type="project" value="UniProtKB-SubCell"/>
</dbReference>
<dbReference type="Gene3D" id="3.50.50.60">
    <property type="entry name" value="FAD/NAD(P)-binding domain"/>
    <property type="match status" value="1"/>
</dbReference>
<dbReference type="InterPro" id="IPR036188">
    <property type="entry name" value="FAD/NAD-bd_sf"/>
</dbReference>
<dbReference type="PANTHER" id="PTHR10668">
    <property type="entry name" value="PHYTOENE DEHYDROGENASE"/>
    <property type="match status" value="1"/>
</dbReference>
<dbReference type="PANTHER" id="PTHR10668:SF103">
    <property type="entry name" value="PYRIDINE NUCLEOTIDE-DISULFIDE OXIDOREDUCTASE DOMAIN-CONTAINING PROTEIN 2"/>
    <property type="match status" value="1"/>
</dbReference>
<dbReference type="Pfam" id="PF13450">
    <property type="entry name" value="NAD_binding_8"/>
    <property type="match status" value="1"/>
</dbReference>
<dbReference type="SUPFAM" id="SSF51905">
    <property type="entry name" value="FAD/NAD(P)-binding domain"/>
    <property type="match status" value="1"/>
</dbReference>
<accession>P9WKP7</accession>
<accession>L0T536</accession>
<accession>P64751</accession>
<accession>Q10555</accession>